<protein>
    <recommendedName>
        <fullName evidence="1">Nucleoside triphosphate/diphosphate phosphatase</fullName>
        <ecNumber evidence="1">3.6.1.15</ecNumber>
        <ecNumber evidence="1">3.6.1.6</ecNumber>
    </recommendedName>
</protein>
<gene>
    <name type="ordered locus">BPUM_0817</name>
</gene>
<organism>
    <name type="scientific">Bacillus pumilus (strain SAFR-032)</name>
    <dbReference type="NCBI Taxonomy" id="315750"/>
    <lineage>
        <taxon>Bacteria</taxon>
        <taxon>Bacillati</taxon>
        <taxon>Bacillota</taxon>
        <taxon>Bacilli</taxon>
        <taxon>Bacillales</taxon>
        <taxon>Bacillaceae</taxon>
        <taxon>Bacillus</taxon>
    </lineage>
</organism>
<keyword id="KW-0378">Hydrolase</keyword>
<keyword id="KW-0460">Magnesium</keyword>
<keyword id="KW-0479">Metal-binding</keyword>
<dbReference type="EC" id="3.6.1.15" evidence="1"/>
<dbReference type="EC" id="3.6.1.6" evidence="1"/>
<dbReference type="EMBL" id="CP000813">
    <property type="protein sequence ID" value="ABV61501.1"/>
    <property type="molecule type" value="Genomic_DNA"/>
</dbReference>
<dbReference type="RefSeq" id="WP_012009337.1">
    <property type="nucleotide sequence ID" value="NZ_VEIS01000018.1"/>
</dbReference>
<dbReference type="SMR" id="A8FB84"/>
<dbReference type="STRING" id="315750.BPUM_0817"/>
<dbReference type="GeneID" id="5620062"/>
<dbReference type="KEGG" id="bpu:BPUM_0817"/>
<dbReference type="eggNOG" id="COG3557">
    <property type="taxonomic scope" value="Bacteria"/>
</dbReference>
<dbReference type="HOGENOM" id="CLU_109787_1_0_9"/>
<dbReference type="OrthoDB" id="1645325at2"/>
<dbReference type="Proteomes" id="UP000001355">
    <property type="component" value="Chromosome"/>
</dbReference>
<dbReference type="GO" id="GO:0000287">
    <property type="term" value="F:magnesium ion binding"/>
    <property type="evidence" value="ECO:0007669"/>
    <property type="project" value="UniProtKB-UniRule"/>
</dbReference>
<dbReference type="GO" id="GO:0017110">
    <property type="term" value="F:nucleoside diphosphate phosphatase activity"/>
    <property type="evidence" value="ECO:0007669"/>
    <property type="project" value="UniProtKB-UniRule"/>
</dbReference>
<dbReference type="GO" id="GO:0017111">
    <property type="term" value="F:ribonucleoside triphosphate phosphatase activity"/>
    <property type="evidence" value="ECO:0007669"/>
    <property type="project" value="UniProtKB-UniRule"/>
</dbReference>
<dbReference type="Gene3D" id="2.40.380.10">
    <property type="entry name" value="FomD-like"/>
    <property type="match status" value="1"/>
</dbReference>
<dbReference type="HAMAP" id="MF_01568">
    <property type="entry name" value="Ntdp"/>
    <property type="match status" value="1"/>
</dbReference>
<dbReference type="InterPro" id="IPR007295">
    <property type="entry name" value="DUF402"/>
</dbReference>
<dbReference type="InterPro" id="IPR035930">
    <property type="entry name" value="FomD-like_sf"/>
</dbReference>
<dbReference type="InterPro" id="IPR050212">
    <property type="entry name" value="Ntdp-like"/>
</dbReference>
<dbReference type="InterPro" id="IPR016882">
    <property type="entry name" value="SA1684"/>
</dbReference>
<dbReference type="NCBIfam" id="NF010183">
    <property type="entry name" value="PRK13662.1"/>
    <property type="match status" value="1"/>
</dbReference>
<dbReference type="PANTHER" id="PTHR39159">
    <property type="match status" value="1"/>
</dbReference>
<dbReference type="PANTHER" id="PTHR39159:SF1">
    <property type="entry name" value="UPF0374 PROTEIN YGAC"/>
    <property type="match status" value="1"/>
</dbReference>
<dbReference type="Pfam" id="PF04167">
    <property type="entry name" value="DUF402"/>
    <property type="match status" value="1"/>
</dbReference>
<dbReference type="PIRSF" id="PIRSF028345">
    <property type="entry name" value="UCP028345"/>
    <property type="match status" value="1"/>
</dbReference>
<dbReference type="SUPFAM" id="SSF159234">
    <property type="entry name" value="FomD-like"/>
    <property type="match status" value="1"/>
</dbReference>
<reference key="1">
    <citation type="journal article" date="2007" name="PLoS ONE">
        <title>Paradoxical DNA repair and peroxide resistance gene conservation in Bacillus pumilus SAFR-032.</title>
        <authorList>
            <person name="Gioia J."/>
            <person name="Yerrapragada S."/>
            <person name="Qin X."/>
            <person name="Jiang H."/>
            <person name="Igboeli O.C."/>
            <person name="Muzny D."/>
            <person name="Dugan-Rocha S."/>
            <person name="Ding Y."/>
            <person name="Hawes A."/>
            <person name="Liu W."/>
            <person name="Perez L."/>
            <person name="Kovar C."/>
            <person name="Dinh H."/>
            <person name="Lee S."/>
            <person name="Nazareth L."/>
            <person name="Blyth P."/>
            <person name="Holder M."/>
            <person name="Buhay C."/>
            <person name="Tirumalai M.R."/>
            <person name="Liu Y."/>
            <person name="Dasgupta I."/>
            <person name="Bokhetache L."/>
            <person name="Fujita M."/>
            <person name="Karouia F."/>
            <person name="Eswara Moorthy P."/>
            <person name="Siefert J."/>
            <person name="Uzman A."/>
            <person name="Buzumbo P."/>
            <person name="Verma A."/>
            <person name="Zwiya H."/>
            <person name="McWilliams B.D."/>
            <person name="Olowu A."/>
            <person name="Clinkenbeard K.D."/>
            <person name="Newcombe D."/>
            <person name="Golebiewski L."/>
            <person name="Petrosino J.F."/>
            <person name="Nicholson W.L."/>
            <person name="Fox G.E."/>
            <person name="Venkateswaran K."/>
            <person name="Highlander S.K."/>
            <person name="Weinstock G.M."/>
        </authorList>
    </citation>
    <scope>NUCLEOTIDE SEQUENCE [LARGE SCALE GENOMIC DNA]</scope>
    <source>
        <strain>SAFR-032</strain>
    </source>
</reference>
<comment type="function">
    <text evidence="1">Has nucleoside phosphatase activity towards nucleoside triphosphates and nucleoside diphosphates.</text>
</comment>
<comment type="catalytic activity">
    <reaction evidence="1">
        <text>a ribonucleoside 5'-triphosphate + H2O = a ribonucleoside 5'-diphosphate + phosphate + H(+)</text>
        <dbReference type="Rhea" id="RHEA:23680"/>
        <dbReference type="ChEBI" id="CHEBI:15377"/>
        <dbReference type="ChEBI" id="CHEBI:15378"/>
        <dbReference type="ChEBI" id="CHEBI:43474"/>
        <dbReference type="ChEBI" id="CHEBI:57930"/>
        <dbReference type="ChEBI" id="CHEBI:61557"/>
        <dbReference type="EC" id="3.6.1.15"/>
    </reaction>
</comment>
<comment type="catalytic activity">
    <reaction evidence="1">
        <text>a ribonucleoside 5'-diphosphate + H2O = a ribonucleoside 5'-phosphate + phosphate + H(+)</text>
        <dbReference type="Rhea" id="RHEA:36799"/>
        <dbReference type="ChEBI" id="CHEBI:15377"/>
        <dbReference type="ChEBI" id="CHEBI:15378"/>
        <dbReference type="ChEBI" id="CHEBI:43474"/>
        <dbReference type="ChEBI" id="CHEBI:57930"/>
        <dbReference type="ChEBI" id="CHEBI:58043"/>
        <dbReference type="EC" id="3.6.1.6"/>
    </reaction>
</comment>
<comment type="cofactor">
    <cofactor evidence="1">
        <name>Mg(2+)</name>
        <dbReference type="ChEBI" id="CHEBI:18420"/>
    </cofactor>
</comment>
<comment type="similarity">
    <text evidence="1">Belongs to the Ntdp family.</text>
</comment>
<accession>A8FB84</accession>
<proteinExistence type="inferred from homology"/>
<evidence type="ECO:0000255" key="1">
    <source>
        <dbReference type="HAMAP-Rule" id="MF_01568"/>
    </source>
</evidence>
<name>NTDP_BACP2</name>
<feature type="chain" id="PRO_1000069103" description="Nucleoside triphosphate/diphosphate phosphatase">
    <location>
        <begin position="1"/>
        <end position="176"/>
    </location>
</feature>
<feature type="active site" description="Proton donor" evidence="1">
    <location>
        <position position="23"/>
    </location>
</feature>
<feature type="binding site" evidence="1">
    <location>
        <position position="87"/>
    </location>
    <ligand>
        <name>Mg(2+)</name>
        <dbReference type="ChEBI" id="CHEBI:18420"/>
        <label>1</label>
    </ligand>
</feature>
<feature type="binding site" evidence="1">
    <location>
        <position position="103"/>
    </location>
    <ligand>
        <name>Mg(2+)</name>
        <dbReference type="ChEBI" id="CHEBI:18420"/>
        <label>1</label>
    </ligand>
</feature>
<feature type="binding site" evidence="1">
    <location>
        <position position="105"/>
    </location>
    <ligand>
        <name>Mg(2+)</name>
        <dbReference type="ChEBI" id="CHEBI:18420"/>
        <label>2</label>
    </ligand>
</feature>
<feature type="binding site" evidence="1">
    <location>
        <position position="107"/>
    </location>
    <ligand>
        <name>Mg(2+)</name>
        <dbReference type="ChEBI" id="CHEBI:18420"/>
        <label>1</label>
    </ligand>
</feature>
<feature type="binding site" evidence="1">
    <location>
        <position position="107"/>
    </location>
    <ligand>
        <name>Mg(2+)</name>
        <dbReference type="ChEBI" id="CHEBI:18420"/>
        <label>2</label>
    </ligand>
</feature>
<feature type="binding site" evidence="1">
    <location>
        <position position="120"/>
    </location>
    <ligand>
        <name>Mg(2+)</name>
        <dbReference type="ChEBI" id="CHEBI:18420"/>
        <label>2</label>
    </ligand>
</feature>
<feature type="binding site" evidence="1">
    <location>
        <position position="123"/>
    </location>
    <ligand>
        <name>Mg(2+)</name>
        <dbReference type="ChEBI" id="CHEBI:18420"/>
        <label>2</label>
    </ligand>
</feature>
<sequence>MGYPKEGETIQIQSYKHNGLIHRIWNETTILKATELCIIGANDRTMVTESDGRTWMTREPAICYFHAKQWFNVIGMLRDDGVYYYCNISSPFATDEEAIKYIDYDLDVKVFPDMTYNILDEDEYADHKRQMNYPKEIDSILREHLNTLLHWIHQRKGPFAPEFVDMWYERFLHYTK</sequence>